<sequence>MNDVIIRQLAHLIPYQPLWEAMQTFTALRQSQTTDEIWFLEHEPVFTQGLAGKPEHVLNSGNIPLIRTDRGGQVTYHGPGQLMMYLLLDLNRLGLSTRTFVRTIENTVAESLQEWGIPAQGKETAPGVYVDDKKICSIGLRVRKGFSYHGLALNVAMDLTPFSCINPCGFKGLMMTQIQDYVNPIEMDAVKRTIIPLFLKNFGYNQPAIMVETSLEFLIDDHLRSFSEKLGERETVTNSRQN</sequence>
<reference key="1">
    <citation type="journal article" date="2009" name="Infect. Immun.">
        <title>Comparative genomics reveal extensive transposon-mediated genomic plasticity and diversity among potential effector proteins within the genus Coxiella.</title>
        <authorList>
            <person name="Beare P.A."/>
            <person name="Unsworth N."/>
            <person name="Andoh M."/>
            <person name="Voth D.E."/>
            <person name="Omsland A."/>
            <person name="Gilk S.D."/>
            <person name="Williams K.P."/>
            <person name="Sobral B.W."/>
            <person name="Kupko J.J. III"/>
            <person name="Porcella S.F."/>
            <person name="Samuel J.E."/>
            <person name="Heinzen R.A."/>
        </authorList>
    </citation>
    <scope>NUCLEOTIDE SEQUENCE [LARGE SCALE GENOMIC DNA]</scope>
    <source>
        <strain>CbuK_Q154</strain>
    </source>
</reference>
<accession>B6J7S2</accession>
<organism>
    <name type="scientific">Coxiella burnetii (strain CbuK_Q154)</name>
    <name type="common">Coxiella burnetii (strain Q154)</name>
    <dbReference type="NCBI Taxonomy" id="434924"/>
    <lineage>
        <taxon>Bacteria</taxon>
        <taxon>Pseudomonadati</taxon>
        <taxon>Pseudomonadota</taxon>
        <taxon>Gammaproteobacteria</taxon>
        <taxon>Legionellales</taxon>
        <taxon>Coxiellaceae</taxon>
        <taxon>Coxiella</taxon>
    </lineage>
</organism>
<gene>
    <name evidence="1" type="primary">lipB</name>
    <name type="ordered locus">CbuK_1126</name>
</gene>
<name>LIPB_COXB1</name>
<proteinExistence type="inferred from homology"/>
<dbReference type="EC" id="2.3.1.181" evidence="1"/>
<dbReference type="EMBL" id="CP001020">
    <property type="protein sequence ID" value="ACJ20321.1"/>
    <property type="molecule type" value="Genomic_DNA"/>
</dbReference>
<dbReference type="RefSeq" id="WP_005770838.1">
    <property type="nucleotide sequence ID" value="NC_011528.1"/>
</dbReference>
<dbReference type="SMR" id="B6J7S2"/>
<dbReference type="KEGG" id="cbc:CbuK_1126"/>
<dbReference type="HOGENOM" id="CLU_035168_3_1_6"/>
<dbReference type="UniPathway" id="UPA00538">
    <property type="reaction ID" value="UER00592"/>
</dbReference>
<dbReference type="GO" id="GO:0005737">
    <property type="term" value="C:cytoplasm"/>
    <property type="evidence" value="ECO:0007669"/>
    <property type="project" value="UniProtKB-SubCell"/>
</dbReference>
<dbReference type="GO" id="GO:0033819">
    <property type="term" value="F:lipoyl(octanoyl) transferase activity"/>
    <property type="evidence" value="ECO:0007669"/>
    <property type="project" value="UniProtKB-EC"/>
</dbReference>
<dbReference type="GO" id="GO:0036211">
    <property type="term" value="P:protein modification process"/>
    <property type="evidence" value="ECO:0007669"/>
    <property type="project" value="InterPro"/>
</dbReference>
<dbReference type="CDD" id="cd16444">
    <property type="entry name" value="LipB"/>
    <property type="match status" value="1"/>
</dbReference>
<dbReference type="FunFam" id="3.30.930.10:FF:000020">
    <property type="entry name" value="Octanoyltransferase"/>
    <property type="match status" value="1"/>
</dbReference>
<dbReference type="Gene3D" id="3.30.930.10">
    <property type="entry name" value="Bira Bifunctional Protein, Domain 2"/>
    <property type="match status" value="1"/>
</dbReference>
<dbReference type="HAMAP" id="MF_00013">
    <property type="entry name" value="LipB"/>
    <property type="match status" value="1"/>
</dbReference>
<dbReference type="InterPro" id="IPR045864">
    <property type="entry name" value="aa-tRNA-synth_II/BPL/LPL"/>
</dbReference>
<dbReference type="InterPro" id="IPR004143">
    <property type="entry name" value="BPL_LPL_catalytic"/>
</dbReference>
<dbReference type="InterPro" id="IPR000544">
    <property type="entry name" value="Octanoyltransferase"/>
</dbReference>
<dbReference type="InterPro" id="IPR020605">
    <property type="entry name" value="Octanoyltransferase_CS"/>
</dbReference>
<dbReference type="NCBIfam" id="TIGR00214">
    <property type="entry name" value="lipB"/>
    <property type="match status" value="1"/>
</dbReference>
<dbReference type="NCBIfam" id="NF010922">
    <property type="entry name" value="PRK14342.1"/>
    <property type="match status" value="1"/>
</dbReference>
<dbReference type="PANTHER" id="PTHR10993:SF7">
    <property type="entry name" value="LIPOYLTRANSFERASE 2, MITOCHONDRIAL-RELATED"/>
    <property type="match status" value="1"/>
</dbReference>
<dbReference type="PANTHER" id="PTHR10993">
    <property type="entry name" value="OCTANOYLTRANSFERASE"/>
    <property type="match status" value="1"/>
</dbReference>
<dbReference type="Pfam" id="PF21948">
    <property type="entry name" value="LplA-B_cat"/>
    <property type="match status" value="1"/>
</dbReference>
<dbReference type="PIRSF" id="PIRSF016262">
    <property type="entry name" value="LPLase"/>
    <property type="match status" value="1"/>
</dbReference>
<dbReference type="SUPFAM" id="SSF55681">
    <property type="entry name" value="Class II aaRS and biotin synthetases"/>
    <property type="match status" value="1"/>
</dbReference>
<dbReference type="PROSITE" id="PS51733">
    <property type="entry name" value="BPL_LPL_CATALYTIC"/>
    <property type="match status" value="1"/>
</dbReference>
<dbReference type="PROSITE" id="PS01313">
    <property type="entry name" value="LIPB"/>
    <property type="match status" value="1"/>
</dbReference>
<keyword id="KW-0012">Acyltransferase</keyword>
<keyword id="KW-0963">Cytoplasm</keyword>
<keyword id="KW-0808">Transferase</keyword>
<comment type="function">
    <text evidence="1">Catalyzes the transfer of endogenously produced octanoic acid from octanoyl-acyl-carrier-protein onto the lipoyl domains of lipoate-dependent enzymes. Lipoyl-ACP can also act as a substrate although octanoyl-ACP is likely to be the physiological substrate.</text>
</comment>
<comment type="catalytic activity">
    <reaction evidence="1">
        <text>octanoyl-[ACP] + L-lysyl-[protein] = N(6)-octanoyl-L-lysyl-[protein] + holo-[ACP] + H(+)</text>
        <dbReference type="Rhea" id="RHEA:17665"/>
        <dbReference type="Rhea" id="RHEA-COMP:9636"/>
        <dbReference type="Rhea" id="RHEA-COMP:9685"/>
        <dbReference type="Rhea" id="RHEA-COMP:9752"/>
        <dbReference type="Rhea" id="RHEA-COMP:9928"/>
        <dbReference type="ChEBI" id="CHEBI:15378"/>
        <dbReference type="ChEBI" id="CHEBI:29969"/>
        <dbReference type="ChEBI" id="CHEBI:64479"/>
        <dbReference type="ChEBI" id="CHEBI:78463"/>
        <dbReference type="ChEBI" id="CHEBI:78809"/>
        <dbReference type="EC" id="2.3.1.181"/>
    </reaction>
</comment>
<comment type="pathway">
    <text evidence="1">Protein modification; protein lipoylation via endogenous pathway; protein N(6)-(lipoyl)lysine from octanoyl-[acyl-carrier-protein]: step 1/2.</text>
</comment>
<comment type="subcellular location">
    <subcellularLocation>
        <location evidence="1">Cytoplasm</location>
    </subcellularLocation>
</comment>
<comment type="miscellaneous">
    <text evidence="1">In the reaction, the free carboxyl group of octanoic acid is attached via an amide linkage to the epsilon-amino group of a specific lysine residue of lipoyl domains of lipoate-dependent enzymes.</text>
</comment>
<comment type="similarity">
    <text evidence="1">Belongs to the LipB family.</text>
</comment>
<protein>
    <recommendedName>
        <fullName evidence="1">Octanoyltransferase</fullName>
        <ecNumber evidence="1">2.3.1.181</ecNumber>
    </recommendedName>
    <alternativeName>
        <fullName evidence="1">Lipoate-protein ligase B</fullName>
    </alternativeName>
    <alternativeName>
        <fullName evidence="1">Lipoyl/octanoyl transferase</fullName>
    </alternativeName>
    <alternativeName>
        <fullName evidence="1">Octanoyl-[acyl-carrier-protein]-protein N-octanoyltransferase</fullName>
    </alternativeName>
</protein>
<evidence type="ECO:0000255" key="1">
    <source>
        <dbReference type="HAMAP-Rule" id="MF_00013"/>
    </source>
</evidence>
<evidence type="ECO:0000255" key="2">
    <source>
        <dbReference type="PROSITE-ProRule" id="PRU01067"/>
    </source>
</evidence>
<feature type="chain" id="PRO_1000089451" description="Octanoyltransferase">
    <location>
        <begin position="1"/>
        <end position="242"/>
    </location>
</feature>
<feature type="domain" description="BPL/LPL catalytic" evidence="2">
    <location>
        <begin position="31"/>
        <end position="206"/>
    </location>
</feature>
<feature type="active site" description="Acyl-thioester intermediate" evidence="1">
    <location>
        <position position="168"/>
    </location>
</feature>
<feature type="binding site" evidence="1">
    <location>
        <begin position="70"/>
        <end position="77"/>
    </location>
    <ligand>
        <name>substrate</name>
    </ligand>
</feature>
<feature type="binding site" evidence="1">
    <location>
        <begin position="137"/>
        <end position="139"/>
    </location>
    <ligand>
        <name>substrate</name>
    </ligand>
</feature>
<feature type="binding site" evidence="1">
    <location>
        <begin position="150"/>
        <end position="152"/>
    </location>
    <ligand>
        <name>substrate</name>
    </ligand>
</feature>
<feature type="site" description="Lowers pKa of active site Cys" evidence="1">
    <location>
        <position position="134"/>
    </location>
</feature>